<name>G3P_CERSP</name>
<gene>
    <name type="primary">gapB</name>
</gene>
<proteinExistence type="inferred from homology"/>
<sequence length="333" mass="35679">MTIRVAINGFGRIGRNVLRAIVESGRTDIEVVAINDLGQVETNAHLLRFDSVHGRFPAKVTSGDDWIDVGRGPIKVTAIRNPAELPWAGVDMAMECTGIFTTKEKAAAHLQNGAKRVLVSAPCDGADRTIVYGVNHATLTADDLVVSNASCTTNCLSPVAKVLHDAIGIAKGFMTTIHSYTGDQPTLDTMHKDLYRARAAALSMIPTSTGAAKAVGLVLPELKGRLDGVSIRVPTPNVSVVDLVFEAARDTTVEEVNAAIEAAACGPLKGVLGFTTEPNVSSDFNHDPHSSVFHMDQTKVMEGRMVRILSWYDNEWGFSNRMADTAVAMGRLL</sequence>
<reference key="1">
    <citation type="journal article" date="1991" name="J. Biol. Chem.">
        <title>Identification, expression, and deduced primary structure of transketolase and other enzymes encoded within the form II CO2 fixation operon of Rhodobacter sphaeroides.</title>
        <authorList>
            <person name="Chen J.-H."/>
            <person name="Gibson J.L."/>
            <person name="McCue L.A."/>
            <person name="Tabita F.R."/>
        </authorList>
    </citation>
    <scope>NUCLEOTIDE SEQUENCE [GENOMIC DNA]</scope>
</reference>
<dbReference type="EC" id="1.2.1.12" evidence="1"/>
<dbReference type="EMBL" id="M68914">
    <property type="protein sequence ID" value="AAA26156.1"/>
    <property type="molecule type" value="Genomic_DNA"/>
</dbReference>
<dbReference type="PIR" id="C41080">
    <property type="entry name" value="C41080"/>
</dbReference>
<dbReference type="SMR" id="P29272"/>
<dbReference type="UniPathway" id="UPA00109">
    <property type="reaction ID" value="UER00184"/>
</dbReference>
<dbReference type="GO" id="GO:0005737">
    <property type="term" value="C:cytoplasm"/>
    <property type="evidence" value="ECO:0007669"/>
    <property type="project" value="UniProtKB-SubCell"/>
</dbReference>
<dbReference type="GO" id="GO:0004365">
    <property type="term" value="F:glyceraldehyde-3-phosphate dehydrogenase (NAD+) (phosphorylating) activity"/>
    <property type="evidence" value="ECO:0000250"/>
    <property type="project" value="UniProtKB"/>
</dbReference>
<dbReference type="GO" id="GO:0051287">
    <property type="term" value="F:NAD binding"/>
    <property type="evidence" value="ECO:0000250"/>
    <property type="project" value="UniProtKB"/>
</dbReference>
<dbReference type="GO" id="GO:0050661">
    <property type="term" value="F:NADP binding"/>
    <property type="evidence" value="ECO:0007669"/>
    <property type="project" value="InterPro"/>
</dbReference>
<dbReference type="GO" id="GO:0006006">
    <property type="term" value="P:glucose metabolic process"/>
    <property type="evidence" value="ECO:0007669"/>
    <property type="project" value="InterPro"/>
</dbReference>
<dbReference type="GO" id="GO:0006096">
    <property type="term" value="P:glycolytic process"/>
    <property type="evidence" value="ECO:0007669"/>
    <property type="project" value="UniProtKB-UniPathway"/>
</dbReference>
<dbReference type="CDD" id="cd18126">
    <property type="entry name" value="GAPDH_I_C"/>
    <property type="match status" value="1"/>
</dbReference>
<dbReference type="CDD" id="cd05214">
    <property type="entry name" value="GAPDH_I_N"/>
    <property type="match status" value="1"/>
</dbReference>
<dbReference type="FunFam" id="3.30.360.10:FF:000002">
    <property type="entry name" value="Glyceraldehyde-3-phosphate dehydrogenase"/>
    <property type="match status" value="1"/>
</dbReference>
<dbReference type="FunFam" id="3.40.50.720:FF:000001">
    <property type="entry name" value="Glyceraldehyde-3-phosphate dehydrogenase"/>
    <property type="match status" value="1"/>
</dbReference>
<dbReference type="Gene3D" id="3.30.360.10">
    <property type="entry name" value="Dihydrodipicolinate Reductase, domain 2"/>
    <property type="match status" value="1"/>
</dbReference>
<dbReference type="Gene3D" id="3.40.50.720">
    <property type="entry name" value="NAD(P)-binding Rossmann-like Domain"/>
    <property type="match status" value="1"/>
</dbReference>
<dbReference type="InterPro" id="IPR020831">
    <property type="entry name" value="GlycerAld/Erythrose_P_DH"/>
</dbReference>
<dbReference type="InterPro" id="IPR020830">
    <property type="entry name" value="GlycerAld_3-P_DH_AS"/>
</dbReference>
<dbReference type="InterPro" id="IPR020829">
    <property type="entry name" value="GlycerAld_3-P_DH_cat"/>
</dbReference>
<dbReference type="InterPro" id="IPR020828">
    <property type="entry name" value="GlycerAld_3-P_DH_NAD(P)-bd"/>
</dbReference>
<dbReference type="InterPro" id="IPR006424">
    <property type="entry name" value="Glyceraldehyde-3-P_DH_1"/>
</dbReference>
<dbReference type="InterPro" id="IPR036291">
    <property type="entry name" value="NAD(P)-bd_dom_sf"/>
</dbReference>
<dbReference type="NCBIfam" id="TIGR01534">
    <property type="entry name" value="GAPDH-I"/>
    <property type="match status" value="1"/>
</dbReference>
<dbReference type="PANTHER" id="PTHR43148">
    <property type="entry name" value="GLYCERALDEHYDE-3-PHOSPHATE DEHYDROGENASE 2"/>
    <property type="match status" value="1"/>
</dbReference>
<dbReference type="Pfam" id="PF02800">
    <property type="entry name" value="Gp_dh_C"/>
    <property type="match status" value="1"/>
</dbReference>
<dbReference type="Pfam" id="PF00044">
    <property type="entry name" value="Gp_dh_N"/>
    <property type="match status" value="1"/>
</dbReference>
<dbReference type="PIRSF" id="PIRSF000149">
    <property type="entry name" value="GAP_DH"/>
    <property type="match status" value="1"/>
</dbReference>
<dbReference type="PRINTS" id="PR00078">
    <property type="entry name" value="G3PDHDRGNASE"/>
</dbReference>
<dbReference type="SMART" id="SM00846">
    <property type="entry name" value="Gp_dh_N"/>
    <property type="match status" value="1"/>
</dbReference>
<dbReference type="SUPFAM" id="SSF55347">
    <property type="entry name" value="Glyceraldehyde-3-phosphate dehydrogenase-like, C-terminal domain"/>
    <property type="match status" value="1"/>
</dbReference>
<dbReference type="SUPFAM" id="SSF51735">
    <property type="entry name" value="NAD(P)-binding Rossmann-fold domains"/>
    <property type="match status" value="1"/>
</dbReference>
<dbReference type="PROSITE" id="PS00071">
    <property type="entry name" value="GAPDH"/>
    <property type="match status" value="1"/>
</dbReference>
<comment type="function">
    <text evidence="1">Catalyzes the oxidative phosphorylation of glyceraldehyde 3-phosphate (G3P) to 1,3-bisphosphoglycerate (BPG) using the cofactor NAD. The first reaction step involves the formation of a hemiacetal intermediate between G3P and a cysteine residue, and this hemiacetal intermediate is then oxidized to a thioester, with concomitant reduction of NAD to NADH. The reduced NADH is then exchanged with the second NAD, and the thioester is attacked by a nucleophilic inorganic phosphate to produce BPG.</text>
</comment>
<comment type="catalytic activity">
    <reaction evidence="1">
        <text>D-glyceraldehyde 3-phosphate + phosphate + NAD(+) = (2R)-3-phospho-glyceroyl phosphate + NADH + H(+)</text>
        <dbReference type="Rhea" id="RHEA:10300"/>
        <dbReference type="ChEBI" id="CHEBI:15378"/>
        <dbReference type="ChEBI" id="CHEBI:43474"/>
        <dbReference type="ChEBI" id="CHEBI:57540"/>
        <dbReference type="ChEBI" id="CHEBI:57604"/>
        <dbReference type="ChEBI" id="CHEBI:57945"/>
        <dbReference type="ChEBI" id="CHEBI:59776"/>
        <dbReference type="EC" id="1.2.1.12"/>
    </reaction>
</comment>
<comment type="pathway">
    <text evidence="2">Carbohydrate degradation; glycolysis; pyruvate from D-glyceraldehyde 3-phosphate: step 1/5.</text>
</comment>
<comment type="subunit">
    <text evidence="1">Homotetramer.</text>
</comment>
<comment type="subcellular location">
    <subcellularLocation>
        <location evidence="2">Cytoplasm</location>
    </subcellularLocation>
</comment>
<comment type="miscellaneous">
    <text evidence="3">This protein is encoded within the form II ribulose-bisphosphate carboxylase operon.</text>
</comment>
<comment type="similarity">
    <text evidence="2">Belongs to the glyceraldehyde-3-phosphate dehydrogenase family.</text>
</comment>
<accession>P29272</accession>
<keyword id="KW-0963">Cytoplasm</keyword>
<keyword id="KW-0324">Glycolysis</keyword>
<keyword id="KW-0520">NAD</keyword>
<keyword id="KW-0547">Nucleotide-binding</keyword>
<keyword id="KW-0560">Oxidoreductase</keyword>
<feature type="chain" id="PRO_0000145675" description="Glyceraldehyde-3-phosphate dehydrogenase">
    <location>
        <begin position="1"/>
        <end position="333"/>
    </location>
</feature>
<feature type="active site" description="Nucleophile" evidence="1">
    <location>
        <position position="151"/>
    </location>
</feature>
<feature type="binding site" evidence="1">
    <location>
        <begin position="12"/>
        <end position="13"/>
    </location>
    <ligand>
        <name>NAD(+)</name>
        <dbReference type="ChEBI" id="CHEBI:57540"/>
    </ligand>
</feature>
<feature type="binding site" evidence="1">
    <location>
        <position position="36"/>
    </location>
    <ligand>
        <name>NAD(+)</name>
        <dbReference type="ChEBI" id="CHEBI:57540"/>
    </ligand>
</feature>
<feature type="binding site" evidence="1">
    <location>
        <position position="80"/>
    </location>
    <ligand>
        <name>NAD(+)</name>
        <dbReference type="ChEBI" id="CHEBI:57540"/>
    </ligand>
</feature>
<feature type="binding site" evidence="1">
    <location>
        <position position="120"/>
    </location>
    <ligand>
        <name>NAD(+)</name>
        <dbReference type="ChEBI" id="CHEBI:57540"/>
    </ligand>
</feature>
<feature type="binding site" evidence="1">
    <location>
        <begin position="150"/>
        <end position="152"/>
    </location>
    <ligand>
        <name>D-glyceraldehyde 3-phosphate</name>
        <dbReference type="ChEBI" id="CHEBI:59776"/>
    </ligand>
</feature>
<feature type="binding site" evidence="1">
    <location>
        <position position="181"/>
    </location>
    <ligand>
        <name>D-glyceraldehyde 3-phosphate</name>
        <dbReference type="ChEBI" id="CHEBI:59776"/>
    </ligand>
</feature>
<feature type="binding site" evidence="1">
    <location>
        <position position="196"/>
    </location>
    <ligand>
        <name>D-glyceraldehyde 3-phosphate</name>
        <dbReference type="ChEBI" id="CHEBI:59776"/>
    </ligand>
</feature>
<feature type="binding site" evidence="1">
    <location>
        <begin position="209"/>
        <end position="210"/>
    </location>
    <ligand>
        <name>D-glyceraldehyde 3-phosphate</name>
        <dbReference type="ChEBI" id="CHEBI:59776"/>
    </ligand>
</feature>
<feature type="binding site" evidence="1">
    <location>
        <position position="232"/>
    </location>
    <ligand>
        <name>D-glyceraldehyde 3-phosphate</name>
        <dbReference type="ChEBI" id="CHEBI:59776"/>
    </ligand>
</feature>
<feature type="binding site" evidence="1">
    <location>
        <position position="314"/>
    </location>
    <ligand>
        <name>NAD(+)</name>
        <dbReference type="ChEBI" id="CHEBI:57540"/>
    </ligand>
</feature>
<feature type="site" description="Activates thiol group during catalysis" evidence="1">
    <location>
        <position position="178"/>
    </location>
</feature>
<organism>
    <name type="scientific">Cereibacter sphaeroides</name>
    <name type="common">Rhodobacter sphaeroides</name>
    <dbReference type="NCBI Taxonomy" id="1063"/>
    <lineage>
        <taxon>Bacteria</taxon>
        <taxon>Pseudomonadati</taxon>
        <taxon>Pseudomonadota</taxon>
        <taxon>Alphaproteobacteria</taxon>
        <taxon>Rhodobacterales</taxon>
        <taxon>Paracoccaceae</taxon>
        <taxon>Cereibacter</taxon>
    </lineage>
</organism>
<protein>
    <recommendedName>
        <fullName evidence="1">Glyceraldehyde-3-phosphate dehydrogenase</fullName>
        <shortName evidence="1">GAPDH</shortName>
        <ecNumber evidence="1">1.2.1.12</ecNumber>
    </recommendedName>
    <alternativeName>
        <fullName evidence="1">NAD-dependent glyceraldehyde-3-phosphate dehydrogenase</fullName>
    </alternativeName>
</protein>
<evidence type="ECO:0000250" key="1">
    <source>
        <dbReference type="UniProtKB" id="P0A9B2"/>
    </source>
</evidence>
<evidence type="ECO:0000305" key="2"/>
<evidence type="ECO:0000305" key="3">
    <source>
    </source>
</evidence>